<comment type="function">
    <text evidence="1">Could be involved in insertion of integral membrane proteins into the membrane.</text>
</comment>
<comment type="subcellular location">
    <subcellularLocation>
        <location evidence="1">Cell inner membrane</location>
        <topology evidence="1">Peripheral membrane protein</topology>
        <orientation evidence="1">Cytoplasmic side</orientation>
    </subcellularLocation>
</comment>
<comment type="similarity">
    <text evidence="1">Belongs to the UPF0161 family.</text>
</comment>
<accession>O50638</accession>
<protein>
    <recommendedName>
        <fullName evidence="1">Putative membrane protein insertion efficiency factor</fullName>
    </recommendedName>
</protein>
<keyword id="KW-0997">Cell inner membrane</keyword>
<keyword id="KW-1003">Cell membrane</keyword>
<keyword id="KW-0472">Membrane</keyword>
<keyword id="KW-1185">Reference proteome</keyword>
<feature type="chain" id="PRO_0000171836" description="Putative membrane protein insertion efficiency factor">
    <location>
        <begin position="1"/>
        <end position="74"/>
    </location>
</feature>
<reference key="1">
    <citation type="journal article" date="1998" name="Gene">
        <title>Physical and genetic maps of the Leptospira interrogans serovar icterohaemorrhagiae strain Ictero No.1 chromosome and sequencing of a 19-kb region of the genome containing the 5S rRNA gene.</title>
        <authorList>
            <person name="Takahashi Y."/>
            <person name="Akase K."/>
            <person name="Hirano H."/>
            <person name="Fukunaga M."/>
        </authorList>
    </citation>
    <scope>NUCLEOTIDE SEQUENCE [GENOMIC DNA]</scope>
    <source>
        <strain>Ictero No.1 / Serogroup Icterohaemorrhagiae</strain>
    </source>
</reference>
<reference key="2">
    <citation type="journal article" date="2003" name="Nature">
        <title>Unique physiological and pathogenic features of Leptospira interrogans revealed by whole-genome sequencing.</title>
        <authorList>
            <person name="Ren S.-X."/>
            <person name="Fu G."/>
            <person name="Jiang X.-G."/>
            <person name="Zeng R."/>
            <person name="Miao Y.-G."/>
            <person name="Xu H."/>
            <person name="Zhang Y.-X."/>
            <person name="Xiong H."/>
            <person name="Lu G."/>
            <person name="Lu L.-F."/>
            <person name="Jiang H.-Q."/>
            <person name="Jia J."/>
            <person name="Tu Y.-F."/>
            <person name="Jiang J.-X."/>
            <person name="Gu W.-Y."/>
            <person name="Zhang Y.-Q."/>
            <person name="Cai Z."/>
            <person name="Sheng H.-H."/>
            <person name="Yin H.-F."/>
            <person name="Zhang Y."/>
            <person name="Zhu G.-F."/>
            <person name="Wan M."/>
            <person name="Huang H.-L."/>
            <person name="Qian Z."/>
            <person name="Wang S.-Y."/>
            <person name="Ma W."/>
            <person name="Yao Z.-J."/>
            <person name="Shen Y."/>
            <person name="Qiang B.-Q."/>
            <person name="Xia Q.-C."/>
            <person name="Guo X.-K."/>
            <person name="Danchin A."/>
            <person name="Saint Girons I."/>
            <person name="Somerville R.L."/>
            <person name="Wen Y.-M."/>
            <person name="Shi M.-H."/>
            <person name="Chen Z."/>
            <person name="Xu J.-G."/>
            <person name="Zhao G.-P."/>
        </authorList>
    </citation>
    <scope>NUCLEOTIDE SEQUENCE [LARGE SCALE GENOMIC DNA]</scope>
    <source>
        <strain>56601</strain>
    </source>
</reference>
<dbReference type="EMBL" id="AB010203">
    <property type="protein sequence ID" value="BAA24370.1"/>
    <property type="molecule type" value="Genomic_DNA"/>
</dbReference>
<dbReference type="EMBL" id="AE010300">
    <property type="protein sequence ID" value="AAN47376.1"/>
    <property type="molecule type" value="Genomic_DNA"/>
</dbReference>
<dbReference type="PIR" id="T00123">
    <property type="entry name" value="T00123"/>
</dbReference>
<dbReference type="RefSeq" id="NP_710358.1">
    <property type="nucleotide sequence ID" value="NC_004342.2"/>
</dbReference>
<dbReference type="FunCoup" id="O50638">
    <property type="interactions" value="249"/>
</dbReference>
<dbReference type="STRING" id="189518.LA_0177"/>
<dbReference type="PaxDb" id="189518-LA_0177"/>
<dbReference type="EnsemblBacteria" id="AAN47376">
    <property type="protein sequence ID" value="AAN47376"/>
    <property type="gene ID" value="LA_0177"/>
</dbReference>
<dbReference type="KEGG" id="lil:LA_0177"/>
<dbReference type="PATRIC" id="fig|189518.3.peg.176"/>
<dbReference type="HOGENOM" id="CLU_144811_6_0_12"/>
<dbReference type="InParanoid" id="O50638"/>
<dbReference type="OrthoDB" id="9801753at2"/>
<dbReference type="Proteomes" id="UP000001408">
    <property type="component" value="Chromosome I"/>
</dbReference>
<dbReference type="GO" id="GO:0005886">
    <property type="term" value="C:plasma membrane"/>
    <property type="evidence" value="ECO:0007669"/>
    <property type="project" value="UniProtKB-SubCell"/>
</dbReference>
<dbReference type="HAMAP" id="MF_00386">
    <property type="entry name" value="UPF0161_YidD"/>
    <property type="match status" value="1"/>
</dbReference>
<dbReference type="InterPro" id="IPR002696">
    <property type="entry name" value="Membr_insert_effic_factor_YidD"/>
</dbReference>
<dbReference type="NCBIfam" id="TIGR00278">
    <property type="entry name" value="membrane protein insertion efficiency factor YidD"/>
    <property type="match status" value="1"/>
</dbReference>
<dbReference type="PANTHER" id="PTHR33383">
    <property type="entry name" value="MEMBRANE PROTEIN INSERTION EFFICIENCY FACTOR-RELATED"/>
    <property type="match status" value="1"/>
</dbReference>
<dbReference type="PANTHER" id="PTHR33383:SF1">
    <property type="entry name" value="MEMBRANE PROTEIN INSERTION EFFICIENCY FACTOR-RELATED"/>
    <property type="match status" value="1"/>
</dbReference>
<dbReference type="Pfam" id="PF01809">
    <property type="entry name" value="YidD"/>
    <property type="match status" value="1"/>
</dbReference>
<dbReference type="SMART" id="SM01234">
    <property type="entry name" value="Haemolytic"/>
    <property type="match status" value="1"/>
</dbReference>
<sequence>MNRFVIQLIQLYKRLLSPLLPPACRFTPTCSEYAAQAFQEYGFFRALQLSIWRILRCNPLSRGFDDPLPPNTKG</sequence>
<organism>
    <name type="scientific">Leptospira interrogans serogroup Icterohaemorrhagiae serovar Lai (strain 56601)</name>
    <dbReference type="NCBI Taxonomy" id="189518"/>
    <lineage>
        <taxon>Bacteria</taxon>
        <taxon>Pseudomonadati</taxon>
        <taxon>Spirochaetota</taxon>
        <taxon>Spirochaetia</taxon>
        <taxon>Leptospirales</taxon>
        <taxon>Leptospiraceae</taxon>
        <taxon>Leptospira</taxon>
    </lineage>
</organism>
<name>YIDD_LEPIN</name>
<gene>
    <name type="ordered locus">LA_0177</name>
</gene>
<proteinExistence type="inferred from homology"/>
<evidence type="ECO:0000255" key="1">
    <source>
        <dbReference type="HAMAP-Rule" id="MF_00386"/>
    </source>
</evidence>